<sequence length="818" mass="92827">MSGWRKIYYKLLNLILKLLVKSKVIPTDPVAELRLDTTRPVFYVLPYNSKVDLLTLRDRCLALDLPDPLDDNEIDGVILPRYVFIDDGPRVFRYYAPKQASVKLFLDYLDLHRGNPSLDIQMIPVSVMFGRAPGREDHKGAPQLRLLNGIQKFFAVLWLGRDSFVRFSNTVSLRYMADEHGTDKTIAQKLARVARMHFSRLRLAAVGPRLPDRQALFNKLLGSKAIEKAVEDEARSKKISREKAQQNAVALMEEIAADFTYEAVRLSDRVLSWTWNRLYQGINVHNAERVRQLAQDGHEIVYVPCHRSHMDYLLLSYVLYHQGLVPPHIAAGINLNFWPAGPIFRRLGAFFIRRTFKGNKLYSTVFREYLGELFSRGYSVEYFMEGGRSRTGRLLEPKTGTLAMTLQAMLRGGKRPITLVPVYIGYEHVMEVATYAKELRGATKEKESLPQMVRGLRKLRNLGQGYVNFGEPISLNVWLNQHVPEWREAIDPIEAQRPHWLPASVNSIAGEVMVNINKAAAANAMNLCATALLASRQRALTREQLLEQLECYLQLLQNVPYAPDATLPQRTPQELLDHALQMNKFEVEKDNIGDLIILPREQAVLMTYYRNNIQHMLVLPALVASMVIHHRQISRDELLRQAAVIYPMLKQELFMHYVPETLPQVLSPIIDELCRQQLISLQDDTLIINPPRIRSLQLLAAGVRETLQRYAITFSLLSANPSISRGALEKESRILAQRLSLLHGINAPEFFDKAVFATLVATLRAEGYINDVGDAVREQTLEIYNLLADLLTPEIRLTIESVSIAALEDTGGADGGTA</sequence>
<gene>
    <name evidence="1" type="primary">plsB</name>
    <name type="ordered locus">NT01EI_0225</name>
</gene>
<dbReference type="EC" id="2.3.1.15" evidence="1"/>
<dbReference type="EMBL" id="CP001600">
    <property type="protein sequence ID" value="ACR67468.1"/>
    <property type="molecule type" value="Genomic_DNA"/>
</dbReference>
<dbReference type="RefSeq" id="WP_015869677.1">
    <property type="nucleotide sequence ID" value="NZ_CP169062.1"/>
</dbReference>
<dbReference type="SMR" id="C5B706"/>
<dbReference type="STRING" id="67780.B6E78_12250"/>
<dbReference type="GeneID" id="69537326"/>
<dbReference type="KEGG" id="eic:NT01EI_0225"/>
<dbReference type="PATRIC" id="fig|634503.3.peg.201"/>
<dbReference type="HOGENOM" id="CLU_015407_0_0_6"/>
<dbReference type="OrthoDB" id="335193at2"/>
<dbReference type="UniPathway" id="UPA00557">
    <property type="reaction ID" value="UER00612"/>
</dbReference>
<dbReference type="Proteomes" id="UP000001485">
    <property type="component" value="Chromosome"/>
</dbReference>
<dbReference type="GO" id="GO:0005886">
    <property type="term" value="C:plasma membrane"/>
    <property type="evidence" value="ECO:0007669"/>
    <property type="project" value="UniProtKB-SubCell"/>
</dbReference>
<dbReference type="GO" id="GO:0004366">
    <property type="term" value="F:glycerol-3-phosphate O-acyltransferase activity"/>
    <property type="evidence" value="ECO:0007669"/>
    <property type="project" value="UniProtKB-UniRule"/>
</dbReference>
<dbReference type="GO" id="GO:0016024">
    <property type="term" value="P:CDP-diacylglycerol biosynthetic process"/>
    <property type="evidence" value="ECO:0007669"/>
    <property type="project" value="UniProtKB-UniRule"/>
</dbReference>
<dbReference type="GO" id="GO:0006631">
    <property type="term" value="P:fatty acid metabolic process"/>
    <property type="evidence" value="ECO:0007669"/>
    <property type="project" value="TreeGrafter"/>
</dbReference>
<dbReference type="CDD" id="cd07993">
    <property type="entry name" value="LPLAT_DHAPAT-like"/>
    <property type="match status" value="1"/>
</dbReference>
<dbReference type="HAMAP" id="MF_00393">
    <property type="entry name" value="Glyc3P_acyltrans"/>
    <property type="match status" value="1"/>
</dbReference>
<dbReference type="InterPro" id="IPR022284">
    <property type="entry name" value="GPAT/DHAPAT"/>
</dbReference>
<dbReference type="InterPro" id="IPR045520">
    <property type="entry name" value="GPAT/DHAPAT_C"/>
</dbReference>
<dbReference type="InterPro" id="IPR041728">
    <property type="entry name" value="GPAT/DHAPAT_LPLAT"/>
</dbReference>
<dbReference type="InterPro" id="IPR028354">
    <property type="entry name" value="GPAT_PlsB"/>
</dbReference>
<dbReference type="InterPro" id="IPR002123">
    <property type="entry name" value="Plipid/glycerol_acylTrfase"/>
</dbReference>
<dbReference type="NCBIfam" id="TIGR03703">
    <property type="entry name" value="plsB"/>
    <property type="match status" value="1"/>
</dbReference>
<dbReference type="NCBIfam" id="NF003441">
    <property type="entry name" value="PRK04974.1"/>
    <property type="match status" value="1"/>
</dbReference>
<dbReference type="PANTHER" id="PTHR12563:SF17">
    <property type="entry name" value="DIHYDROXYACETONE PHOSPHATE ACYLTRANSFERASE"/>
    <property type="match status" value="1"/>
</dbReference>
<dbReference type="PANTHER" id="PTHR12563">
    <property type="entry name" value="GLYCEROL-3-PHOSPHATE ACYLTRANSFERASE"/>
    <property type="match status" value="1"/>
</dbReference>
<dbReference type="Pfam" id="PF01553">
    <property type="entry name" value="Acyltransferase"/>
    <property type="match status" value="1"/>
</dbReference>
<dbReference type="Pfam" id="PF19277">
    <property type="entry name" value="GPAT_C"/>
    <property type="match status" value="1"/>
</dbReference>
<dbReference type="PIRSF" id="PIRSF500064">
    <property type="entry name" value="GPAT"/>
    <property type="match status" value="1"/>
</dbReference>
<dbReference type="PIRSF" id="PIRSF000437">
    <property type="entry name" value="GPAT_DHAPAT"/>
    <property type="match status" value="1"/>
</dbReference>
<dbReference type="SMART" id="SM00563">
    <property type="entry name" value="PlsC"/>
    <property type="match status" value="1"/>
</dbReference>
<dbReference type="SUPFAM" id="SSF69593">
    <property type="entry name" value="Glycerol-3-phosphate (1)-acyltransferase"/>
    <property type="match status" value="1"/>
</dbReference>
<name>PLSB_EDWI9</name>
<protein>
    <recommendedName>
        <fullName evidence="1">Glycerol-3-phosphate acyltransferase</fullName>
        <shortName evidence="1">GPAT</shortName>
        <ecNumber evidence="1">2.3.1.15</ecNumber>
    </recommendedName>
</protein>
<organism>
    <name type="scientific">Edwardsiella ictaluri (strain 93-146)</name>
    <dbReference type="NCBI Taxonomy" id="634503"/>
    <lineage>
        <taxon>Bacteria</taxon>
        <taxon>Pseudomonadati</taxon>
        <taxon>Pseudomonadota</taxon>
        <taxon>Gammaproteobacteria</taxon>
        <taxon>Enterobacterales</taxon>
        <taxon>Hafniaceae</taxon>
        <taxon>Edwardsiella</taxon>
    </lineage>
</organism>
<comment type="catalytic activity">
    <reaction evidence="1">
        <text>sn-glycerol 3-phosphate + an acyl-CoA = a 1-acyl-sn-glycero-3-phosphate + CoA</text>
        <dbReference type="Rhea" id="RHEA:15325"/>
        <dbReference type="ChEBI" id="CHEBI:57287"/>
        <dbReference type="ChEBI" id="CHEBI:57597"/>
        <dbReference type="ChEBI" id="CHEBI:57970"/>
        <dbReference type="ChEBI" id="CHEBI:58342"/>
        <dbReference type="EC" id="2.3.1.15"/>
    </reaction>
</comment>
<comment type="pathway">
    <text evidence="1">Phospholipid metabolism; CDP-diacylglycerol biosynthesis; CDP-diacylglycerol from sn-glycerol 3-phosphate: step 1/3.</text>
</comment>
<comment type="subcellular location">
    <subcellularLocation>
        <location evidence="1">Cell inner membrane</location>
        <topology evidence="1">Peripheral membrane protein</topology>
        <orientation evidence="1">Cytoplasmic side</orientation>
    </subcellularLocation>
</comment>
<comment type="domain">
    <text evidence="1">The HXXXXD motif is essential for acyltransferase activity and may constitute the binding site for the phosphate moiety of the glycerol-3-phosphate.</text>
</comment>
<comment type="similarity">
    <text evidence="1">Belongs to the GPAT/DAPAT family.</text>
</comment>
<evidence type="ECO:0000255" key="1">
    <source>
        <dbReference type="HAMAP-Rule" id="MF_00393"/>
    </source>
</evidence>
<feature type="chain" id="PRO_1000205849" description="Glycerol-3-phosphate acyltransferase">
    <location>
        <begin position="1"/>
        <end position="818"/>
    </location>
</feature>
<feature type="short sequence motif" description="HXXXXD motif">
    <location>
        <begin position="305"/>
        <end position="310"/>
    </location>
</feature>
<proteinExistence type="inferred from homology"/>
<keyword id="KW-0012">Acyltransferase</keyword>
<keyword id="KW-0997">Cell inner membrane</keyword>
<keyword id="KW-1003">Cell membrane</keyword>
<keyword id="KW-0444">Lipid biosynthesis</keyword>
<keyword id="KW-0443">Lipid metabolism</keyword>
<keyword id="KW-0472">Membrane</keyword>
<keyword id="KW-0594">Phospholipid biosynthesis</keyword>
<keyword id="KW-1208">Phospholipid metabolism</keyword>
<keyword id="KW-0808">Transferase</keyword>
<accession>C5B706</accession>
<reference key="1">
    <citation type="submission" date="2009-03" db="EMBL/GenBank/DDBJ databases">
        <title>Complete genome sequence of Edwardsiella ictaluri 93-146.</title>
        <authorList>
            <person name="Williams M.L."/>
            <person name="Gillaspy A.F."/>
            <person name="Dyer D.W."/>
            <person name="Thune R.L."/>
            <person name="Waldbieser G.C."/>
            <person name="Schuster S.C."/>
            <person name="Gipson J."/>
            <person name="Zaitshik J."/>
            <person name="Landry C."/>
            <person name="Lawrence M.L."/>
        </authorList>
    </citation>
    <scope>NUCLEOTIDE SEQUENCE [LARGE SCALE GENOMIC DNA]</scope>
    <source>
        <strain>93-146</strain>
    </source>
</reference>